<proteinExistence type="inferred from homology"/>
<accession>A9M125</accession>
<sequence>MLTFQQIIFKLQTFWADKGCTVIQPFDMEVGAGTSHPATCLRALGPEPWFAAYVQPSRRPKDGRYGDNPNRLQHYYQFQVALKPAPANIQDLYLDSLRELGIDPKVHDIRFVEDDWENPTLGAWGLGWEVWLNGMEVTQFTYFQQVGGIDCTPVLGEITYGIERLAMYLQGVENVYDLVWAKTLDGNTVTYGDVYHQNEVEQSTYNFEYSDADWLLRQFNDYEAQAKRLLAEENAALALPAYELVLKAGHTFNLLDARGAISVTERATYIGRIRALSRAVAQKYVESREKLGFPLMKANAA</sequence>
<organism>
    <name type="scientific">Neisseria meningitidis serogroup C (strain 053442)</name>
    <dbReference type="NCBI Taxonomy" id="374833"/>
    <lineage>
        <taxon>Bacteria</taxon>
        <taxon>Pseudomonadati</taxon>
        <taxon>Pseudomonadota</taxon>
        <taxon>Betaproteobacteria</taxon>
        <taxon>Neisseriales</taxon>
        <taxon>Neisseriaceae</taxon>
        <taxon>Neisseria</taxon>
    </lineage>
</organism>
<keyword id="KW-0030">Aminoacyl-tRNA synthetase</keyword>
<keyword id="KW-0067">ATP-binding</keyword>
<keyword id="KW-0963">Cytoplasm</keyword>
<keyword id="KW-0436">Ligase</keyword>
<keyword id="KW-0547">Nucleotide-binding</keyword>
<keyword id="KW-0648">Protein biosynthesis</keyword>
<gene>
    <name evidence="1" type="primary">glyQ</name>
    <name type="ordered locus">NMCC_0286</name>
</gene>
<dbReference type="EC" id="6.1.1.14" evidence="1"/>
<dbReference type="EMBL" id="CP000381">
    <property type="protein sequence ID" value="ABX72494.1"/>
    <property type="molecule type" value="Genomic_DNA"/>
</dbReference>
<dbReference type="RefSeq" id="WP_002218046.1">
    <property type="nucleotide sequence ID" value="NC_010120.1"/>
</dbReference>
<dbReference type="SMR" id="A9M125"/>
<dbReference type="GeneID" id="93386838"/>
<dbReference type="KEGG" id="nmn:NMCC_0286"/>
<dbReference type="HOGENOM" id="CLU_057066_1_0_4"/>
<dbReference type="Proteomes" id="UP000001177">
    <property type="component" value="Chromosome"/>
</dbReference>
<dbReference type="GO" id="GO:0005829">
    <property type="term" value="C:cytosol"/>
    <property type="evidence" value="ECO:0007669"/>
    <property type="project" value="TreeGrafter"/>
</dbReference>
<dbReference type="GO" id="GO:0005524">
    <property type="term" value="F:ATP binding"/>
    <property type="evidence" value="ECO:0007669"/>
    <property type="project" value="UniProtKB-UniRule"/>
</dbReference>
<dbReference type="GO" id="GO:0004820">
    <property type="term" value="F:glycine-tRNA ligase activity"/>
    <property type="evidence" value="ECO:0007669"/>
    <property type="project" value="UniProtKB-UniRule"/>
</dbReference>
<dbReference type="GO" id="GO:0006426">
    <property type="term" value="P:glycyl-tRNA aminoacylation"/>
    <property type="evidence" value="ECO:0007669"/>
    <property type="project" value="UniProtKB-UniRule"/>
</dbReference>
<dbReference type="CDD" id="cd00733">
    <property type="entry name" value="GlyRS_alpha_core"/>
    <property type="match status" value="1"/>
</dbReference>
<dbReference type="FunFam" id="3.30.930.10:FF:000006">
    <property type="entry name" value="Glycine--tRNA ligase alpha subunit"/>
    <property type="match status" value="1"/>
</dbReference>
<dbReference type="Gene3D" id="3.30.930.10">
    <property type="entry name" value="Bira Bifunctional Protein, Domain 2"/>
    <property type="match status" value="1"/>
</dbReference>
<dbReference type="Gene3D" id="1.20.58.180">
    <property type="entry name" value="Class II aaRS and biotin synthetases, domain 2"/>
    <property type="match status" value="1"/>
</dbReference>
<dbReference type="HAMAP" id="MF_00254">
    <property type="entry name" value="Gly_tRNA_synth_alpha"/>
    <property type="match status" value="1"/>
</dbReference>
<dbReference type="InterPro" id="IPR045864">
    <property type="entry name" value="aa-tRNA-synth_II/BPL/LPL"/>
</dbReference>
<dbReference type="InterPro" id="IPR006194">
    <property type="entry name" value="Gly-tRNA-synth_heterodimer"/>
</dbReference>
<dbReference type="InterPro" id="IPR002310">
    <property type="entry name" value="Gly-tRNA_ligase_asu"/>
</dbReference>
<dbReference type="NCBIfam" id="TIGR00388">
    <property type="entry name" value="glyQ"/>
    <property type="match status" value="1"/>
</dbReference>
<dbReference type="NCBIfam" id="NF006827">
    <property type="entry name" value="PRK09348.1"/>
    <property type="match status" value="1"/>
</dbReference>
<dbReference type="PANTHER" id="PTHR30075:SF2">
    <property type="entry name" value="GLYCINE--TRNA LIGASE, CHLOROPLASTIC_MITOCHONDRIAL 2"/>
    <property type="match status" value="1"/>
</dbReference>
<dbReference type="PANTHER" id="PTHR30075">
    <property type="entry name" value="GLYCYL-TRNA SYNTHETASE"/>
    <property type="match status" value="1"/>
</dbReference>
<dbReference type="Pfam" id="PF02091">
    <property type="entry name" value="tRNA-synt_2e"/>
    <property type="match status" value="1"/>
</dbReference>
<dbReference type="PRINTS" id="PR01044">
    <property type="entry name" value="TRNASYNTHGA"/>
</dbReference>
<dbReference type="SUPFAM" id="SSF55681">
    <property type="entry name" value="Class II aaRS and biotin synthetases"/>
    <property type="match status" value="1"/>
</dbReference>
<dbReference type="PROSITE" id="PS50861">
    <property type="entry name" value="AA_TRNA_LIGASE_II_GLYAB"/>
    <property type="match status" value="1"/>
</dbReference>
<evidence type="ECO:0000255" key="1">
    <source>
        <dbReference type="HAMAP-Rule" id="MF_00254"/>
    </source>
</evidence>
<comment type="catalytic activity">
    <reaction evidence="1">
        <text>tRNA(Gly) + glycine + ATP = glycyl-tRNA(Gly) + AMP + diphosphate</text>
        <dbReference type="Rhea" id="RHEA:16013"/>
        <dbReference type="Rhea" id="RHEA-COMP:9664"/>
        <dbReference type="Rhea" id="RHEA-COMP:9683"/>
        <dbReference type="ChEBI" id="CHEBI:30616"/>
        <dbReference type="ChEBI" id="CHEBI:33019"/>
        <dbReference type="ChEBI" id="CHEBI:57305"/>
        <dbReference type="ChEBI" id="CHEBI:78442"/>
        <dbReference type="ChEBI" id="CHEBI:78522"/>
        <dbReference type="ChEBI" id="CHEBI:456215"/>
        <dbReference type="EC" id="6.1.1.14"/>
    </reaction>
</comment>
<comment type="subunit">
    <text evidence="1">Tetramer of two alpha and two beta subunits.</text>
</comment>
<comment type="subcellular location">
    <subcellularLocation>
        <location evidence="1">Cytoplasm</location>
    </subcellularLocation>
</comment>
<comment type="similarity">
    <text evidence="1">Belongs to the class-II aminoacyl-tRNA synthetase family.</text>
</comment>
<name>SYGA_NEIM0</name>
<reference key="1">
    <citation type="journal article" date="2008" name="Genomics">
        <title>Characterization of ST-4821 complex, a unique Neisseria meningitidis clone.</title>
        <authorList>
            <person name="Peng J."/>
            <person name="Yang L."/>
            <person name="Yang F."/>
            <person name="Yang J."/>
            <person name="Yan Y."/>
            <person name="Nie H."/>
            <person name="Zhang X."/>
            <person name="Xiong Z."/>
            <person name="Jiang Y."/>
            <person name="Cheng F."/>
            <person name="Xu X."/>
            <person name="Chen S."/>
            <person name="Sun L."/>
            <person name="Li W."/>
            <person name="Shen Y."/>
            <person name="Shao Z."/>
            <person name="Liang X."/>
            <person name="Xu J."/>
            <person name="Jin Q."/>
        </authorList>
    </citation>
    <scope>NUCLEOTIDE SEQUENCE [LARGE SCALE GENOMIC DNA]</scope>
    <source>
        <strain>053442</strain>
    </source>
</reference>
<feature type="chain" id="PRO_1000078529" description="Glycine--tRNA ligase alpha subunit">
    <location>
        <begin position="1"/>
        <end position="301"/>
    </location>
</feature>
<protein>
    <recommendedName>
        <fullName evidence="1">Glycine--tRNA ligase alpha subunit</fullName>
        <ecNumber evidence="1">6.1.1.14</ecNumber>
    </recommendedName>
    <alternativeName>
        <fullName evidence="1">Glycyl-tRNA synthetase alpha subunit</fullName>
        <shortName evidence="1">GlyRS</shortName>
    </alternativeName>
</protein>